<proteinExistence type="inferred from homology"/>
<reference key="1">
    <citation type="submission" date="2006-12" db="EMBL/GenBank/DDBJ databases">
        <title>Complete sequence of Shewanella sp. W3-18-1.</title>
        <authorList>
            <consortium name="US DOE Joint Genome Institute"/>
            <person name="Copeland A."/>
            <person name="Lucas S."/>
            <person name="Lapidus A."/>
            <person name="Barry K."/>
            <person name="Detter J.C."/>
            <person name="Glavina del Rio T."/>
            <person name="Hammon N."/>
            <person name="Israni S."/>
            <person name="Dalin E."/>
            <person name="Tice H."/>
            <person name="Pitluck S."/>
            <person name="Chain P."/>
            <person name="Malfatti S."/>
            <person name="Shin M."/>
            <person name="Vergez L."/>
            <person name="Schmutz J."/>
            <person name="Larimer F."/>
            <person name="Land M."/>
            <person name="Hauser L."/>
            <person name="Kyrpides N."/>
            <person name="Lykidis A."/>
            <person name="Tiedje J."/>
            <person name="Richardson P."/>
        </authorList>
    </citation>
    <scope>NUCLEOTIDE SEQUENCE [LARGE SCALE GENOMIC DNA]</scope>
    <source>
        <strain>W3-18-1</strain>
    </source>
</reference>
<keyword id="KW-0997">Cell inner membrane</keyword>
<keyword id="KW-1003">Cell membrane</keyword>
<keyword id="KW-0378">Hydrolase</keyword>
<keyword id="KW-0472">Membrane</keyword>
<keyword id="KW-0479">Metal-binding</keyword>
<keyword id="KW-0482">Metalloprotease</keyword>
<keyword id="KW-0645">Protease</keyword>
<keyword id="KW-0812">Transmembrane</keyword>
<keyword id="KW-1133">Transmembrane helix</keyword>
<keyword id="KW-0862">Zinc</keyword>
<organism>
    <name type="scientific">Shewanella sp. (strain W3-18-1)</name>
    <dbReference type="NCBI Taxonomy" id="351745"/>
    <lineage>
        <taxon>Bacteria</taxon>
        <taxon>Pseudomonadati</taxon>
        <taxon>Pseudomonadota</taxon>
        <taxon>Gammaproteobacteria</taxon>
        <taxon>Alteromonadales</taxon>
        <taxon>Shewanellaceae</taxon>
        <taxon>Shewanella</taxon>
    </lineage>
</organism>
<accession>A1RIL6</accession>
<gene>
    <name evidence="1" type="primary">htpX</name>
    <name type="ordered locus">Sputw3181_1674</name>
</gene>
<feature type="chain" id="PRO_1000020941" description="Protease HtpX">
    <location>
        <begin position="1"/>
        <end position="287"/>
    </location>
</feature>
<feature type="transmembrane region" description="Helical" evidence="1">
    <location>
        <begin position="4"/>
        <end position="24"/>
    </location>
</feature>
<feature type="transmembrane region" description="Helical" evidence="1">
    <location>
        <begin position="33"/>
        <end position="53"/>
    </location>
</feature>
<feature type="transmembrane region" description="Helical" evidence="1">
    <location>
        <begin position="154"/>
        <end position="174"/>
    </location>
</feature>
<feature type="transmembrane region" description="Helical" evidence="1">
    <location>
        <begin position="195"/>
        <end position="215"/>
    </location>
</feature>
<feature type="active site" evidence="1">
    <location>
        <position position="140"/>
    </location>
</feature>
<feature type="binding site" evidence="1">
    <location>
        <position position="139"/>
    </location>
    <ligand>
        <name>Zn(2+)</name>
        <dbReference type="ChEBI" id="CHEBI:29105"/>
        <note>catalytic</note>
    </ligand>
</feature>
<feature type="binding site" evidence="1">
    <location>
        <position position="143"/>
    </location>
    <ligand>
        <name>Zn(2+)</name>
        <dbReference type="ChEBI" id="CHEBI:29105"/>
        <note>catalytic</note>
    </ligand>
</feature>
<feature type="binding site" evidence="1">
    <location>
        <position position="220"/>
    </location>
    <ligand>
        <name>Zn(2+)</name>
        <dbReference type="ChEBI" id="CHEBI:29105"/>
        <note>catalytic</note>
    </ligand>
</feature>
<evidence type="ECO:0000255" key="1">
    <source>
        <dbReference type="HAMAP-Rule" id="MF_00188"/>
    </source>
</evidence>
<dbReference type="EC" id="3.4.24.-" evidence="1"/>
<dbReference type="EMBL" id="CP000503">
    <property type="protein sequence ID" value="ABM24511.1"/>
    <property type="molecule type" value="Genomic_DNA"/>
</dbReference>
<dbReference type="RefSeq" id="WP_011789009.1">
    <property type="nucleotide sequence ID" value="NC_008750.1"/>
</dbReference>
<dbReference type="SMR" id="A1RIL6"/>
<dbReference type="MEROPS" id="M48.002"/>
<dbReference type="GeneID" id="67443919"/>
<dbReference type="KEGG" id="shw:Sputw3181_1674"/>
<dbReference type="HOGENOM" id="CLU_042266_1_0_6"/>
<dbReference type="Proteomes" id="UP000002597">
    <property type="component" value="Chromosome"/>
</dbReference>
<dbReference type="GO" id="GO:0005886">
    <property type="term" value="C:plasma membrane"/>
    <property type="evidence" value="ECO:0007669"/>
    <property type="project" value="UniProtKB-SubCell"/>
</dbReference>
<dbReference type="GO" id="GO:0004222">
    <property type="term" value="F:metalloendopeptidase activity"/>
    <property type="evidence" value="ECO:0007669"/>
    <property type="project" value="UniProtKB-UniRule"/>
</dbReference>
<dbReference type="GO" id="GO:0008270">
    <property type="term" value="F:zinc ion binding"/>
    <property type="evidence" value="ECO:0007669"/>
    <property type="project" value="UniProtKB-UniRule"/>
</dbReference>
<dbReference type="GO" id="GO:0006508">
    <property type="term" value="P:proteolysis"/>
    <property type="evidence" value="ECO:0007669"/>
    <property type="project" value="UniProtKB-KW"/>
</dbReference>
<dbReference type="CDD" id="cd07335">
    <property type="entry name" value="M48B_HtpX_like"/>
    <property type="match status" value="1"/>
</dbReference>
<dbReference type="FunFam" id="3.30.2010.10:FF:000001">
    <property type="entry name" value="Protease HtpX"/>
    <property type="match status" value="1"/>
</dbReference>
<dbReference type="Gene3D" id="3.30.2010.10">
    <property type="entry name" value="Metalloproteases ('zincins'), catalytic domain"/>
    <property type="match status" value="1"/>
</dbReference>
<dbReference type="HAMAP" id="MF_00188">
    <property type="entry name" value="Pept_M48_protease_HtpX"/>
    <property type="match status" value="1"/>
</dbReference>
<dbReference type="InterPro" id="IPR050083">
    <property type="entry name" value="HtpX_protease"/>
</dbReference>
<dbReference type="InterPro" id="IPR022919">
    <property type="entry name" value="Pept_M48_protease_HtpX"/>
</dbReference>
<dbReference type="InterPro" id="IPR001915">
    <property type="entry name" value="Peptidase_M48"/>
</dbReference>
<dbReference type="NCBIfam" id="NF003965">
    <property type="entry name" value="PRK05457.1"/>
    <property type="match status" value="1"/>
</dbReference>
<dbReference type="PANTHER" id="PTHR43221">
    <property type="entry name" value="PROTEASE HTPX"/>
    <property type="match status" value="1"/>
</dbReference>
<dbReference type="PANTHER" id="PTHR43221:SF1">
    <property type="entry name" value="PROTEASE HTPX"/>
    <property type="match status" value="1"/>
</dbReference>
<dbReference type="Pfam" id="PF01435">
    <property type="entry name" value="Peptidase_M48"/>
    <property type="match status" value="1"/>
</dbReference>
<comment type="cofactor">
    <cofactor evidence="1">
        <name>Zn(2+)</name>
        <dbReference type="ChEBI" id="CHEBI:29105"/>
    </cofactor>
    <text evidence="1">Binds 1 zinc ion per subunit.</text>
</comment>
<comment type="subcellular location">
    <subcellularLocation>
        <location evidence="1">Cell inner membrane</location>
        <topology evidence="1">Multi-pass membrane protein</topology>
    </subcellularLocation>
</comment>
<comment type="similarity">
    <text evidence="1">Belongs to the peptidase M48B family.</text>
</comment>
<sequence length="287" mass="30826">MKRIFLLIATNLAVLLVASIVMSILGVNTSTMGGLLVFAAIFGFGGAFISLAISKWMAKKAMGCEVITMPRDGTERWLVETVARQAQQAGIKMPEVAIYQSPEMNAFATGPSKDNSLVAVSTGLLYGMSQDEVEAVLAHEVSHVANGDMVTLTLIQGVVNTFVIFAARVVAGIINNVVSSNDEEGEGLGMFAYMAVVFVLDMLFGILASIIVAYFSRIREYRADEGAARLAGKHKMIAALERLRQGPESTAMPAQMSAFGINGKRSMAEMMMSHPPLEKRIAALQAR</sequence>
<protein>
    <recommendedName>
        <fullName evidence="1">Protease HtpX</fullName>
        <ecNumber evidence="1">3.4.24.-</ecNumber>
    </recommendedName>
    <alternativeName>
        <fullName evidence="1">Heat shock protein HtpX</fullName>
    </alternativeName>
</protein>
<name>HTPX_SHESW</name>